<gene>
    <name evidence="1" type="primary">proS</name>
    <name type="ordered locus">Cla_0769</name>
</gene>
<proteinExistence type="inferred from homology"/>
<name>SYP_CAMLR</name>
<comment type="function">
    <text evidence="1">Catalyzes the attachment of proline to tRNA(Pro) in a two-step reaction: proline is first activated by ATP to form Pro-AMP and then transferred to the acceptor end of tRNA(Pro). As ProRS can inadvertently accommodate and process non-cognate amino acids such as alanine and cysteine, to avoid such errors it has two additional distinct editing activities against alanine. One activity is designated as 'pretransfer' editing and involves the tRNA(Pro)-independent hydrolysis of activated Ala-AMP. The other activity is designated 'posttransfer' editing and involves deacylation of mischarged Ala-tRNA(Pro). The misacylated Cys-tRNA(Pro) is not edited by ProRS.</text>
</comment>
<comment type="catalytic activity">
    <reaction evidence="1">
        <text>tRNA(Pro) + L-proline + ATP = L-prolyl-tRNA(Pro) + AMP + diphosphate</text>
        <dbReference type="Rhea" id="RHEA:14305"/>
        <dbReference type="Rhea" id="RHEA-COMP:9700"/>
        <dbReference type="Rhea" id="RHEA-COMP:9702"/>
        <dbReference type="ChEBI" id="CHEBI:30616"/>
        <dbReference type="ChEBI" id="CHEBI:33019"/>
        <dbReference type="ChEBI" id="CHEBI:60039"/>
        <dbReference type="ChEBI" id="CHEBI:78442"/>
        <dbReference type="ChEBI" id="CHEBI:78532"/>
        <dbReference type="ChEBI" id="CHEBI:456215"/>
        <dbReference type="EC" id="6.1.1.15"/>
    </reaction>
</comment>
<comment type="subunit">
    <text evidence="1">Homodimer.</text>
</comment>
<comment type="subcellular location">
    <subcellularLocation>
        <location evidence="1">Cytoplasm</location>
    </subcellularLocation>
</comment>
<comment type="domain">
    <text evidence="1">Consists of three domains: the N-terminal catalytic domain, the editing domain and the C-terminal anticodon-binding domain.</text>
</comment>
<comment type="similarity">
    <text evidence="1">Belongs to the class-II aminoacyl-tRNA synthetase family. ProS type 1 subfamily.</text>
</comment>
<feature type="chain" id="PRO_1000185493" description="Proline--tRNA ligase">
    <location>
        <begin position="1"/>
        <end position="565"/>
    </location>
</feature>
<protein>
    <recommendedName>
        <fullName evidence="1">Proline--tRNA ligase</fullName>
        <ecNumber evidence="1">6.1.1.15</ecNumber>
    </recommendedName>
    <alternativeName>
        <fullName evidence="1">Prolyl-tRNA synthetase</fullName>
        <shortName evidence="1">ProRS</shortName>
    </alternativeName>
</protein>
<reference key="1">
    <citation type="journal article" date="2008" name="Foodborne Pathog. Dis.">
        <title>The complete genome sequence and analysis of the human pathogen Campylobacter lari.</title>
        <authorList>
            <person name="Miller W.G."/>
            <person name="Wang G."/>
            <person name="Binnewies T.T."/>
            <person name="Parker C.T."/>
        </authorList>
    </citation>
    <scope>NUCLEOTIDE SEQUENCE [LARGE SCALE GENOMIC DNA]</scope>
    <source>
        <strain>RM2100 / D67 / ATCC BAA-1060</strain>
    </source>
</reference>
<keyword id="KW-0030">Aminoacyl-tRNA synthetase</keyword>
<keyword id="KW-0067">ATP-binding</keyword>
<keyword id="KW-0963">Cytoplasm</keyword>
<keyword id="KW-0436">Ligase</keyword>
<keyword id="KW-0547">Nucleotide-binding</keyword>
<keyword id="KW-0648">Protein biosynthesis</keyword>
<keyword id="KW-1185">Reference proteome</keyword>
<sequence>MKFSKFYAISTKENPKDATLPSHIFLVKGAFIEQIGSGLYNFLPLGKRVLDKIKNIIKEEMDKAGALEVNLSFNTPAELWKESGRFNVFGKELLRFKDRKENDFVLGPTHEEAMVALIRNKITSYKQLPLHLYQIGLKFRDEARPRFGLLRCREFLMKDGYSFHASEADLDKEFNLMHETYSKILTRLGLDFRAVEADSGAIGGSGSKEFMVLAKNGEDDILLCEHCDYAANIEAAKRTKKTCTDERPEADFATQFHTPNVKTIEELAEFFKINPYYTIKAIAKKAIYESEEKIIVFFIRGDDELQEVKALNAANALELVDVSEEELEKAGLVPGFIGFVGLNGVDFYIDHELENETNMIIGANKKDYHLVGINVVNLNKERFKDLAAVKEHDLCPKCQHKLKQSKGIEVGHIFKLGKKYSQAMNASYLDENGKAQFFTMGCYGMGVSRLVAVAIEASHDEKGCIWNKTLAPFVLDIIVSNIKDIKAMEFAEQIYTHFKDKEILFDDRNERFGVKINDFELMGFPYALVIGKSLENDEVELIHRNTLEKQVLKTQEVISHLEKIL</sequence>
<accession>B9KGB1</accession>
<evidence type="ECO:0000255" key="1">
    <source>
        <dbReference type="HAMAP-Rule" id="MF_01569"/>
    </source>
</evidence>
<organism>
    <name type="scientific">Campylobacter lari (strain RM2100 / D67 / ATCC BAA-1060)</name>
    <dbReference type="NCBI Taxonomy" id="306263"/>
    <lineage>
        <taxon>Bacteria</taxon>
        <taxon>Pseudomonadati</taxon>
        <taxon>Campylobacterota</taxon>
        <taxon>Epsilonproteobacteria</taxon>
        <taxon>Campylobacterales</taxon>
        <taxon>Campylobacteraceae</taxon>
        <taxon>Campylobacter</taxon>
    </lineage>
</organism>
<dbReference type="EC" id="6.1.1.15" evidence="1"/>
<dbReference type="EMBL" id="CP000932">
    <property type="protein sequence ID" value="ACM64096.1"/>
    <property type="molecule type" value="Genomic_DNA"/>
</dbReference>
<dbReference type="SMR" id="B9KGB1"/>
<dbReference type="STRING" id="306263.Cla_0769"/>
<dbReference type="KEGG" id="cla:CLA_0769"/>
<dbReference type="PATRIC" id="fig|306263.5.peg.748"/>
<dbReference type="eggNOG" id="COG0442">
    <property type="taxonomic scope" value="Bacteria"/>
</dbReference>
<dbReference type="HOGENOM" id="CLU_016739_0_0_7"/>
<dbReference type="Proteomes" id="UP000007727">
    <property type="component" value="Chromosome"/>
</dbReference>
<dbReference type="GO" id="GO:0005829">
    <property type="term" value="C:cytosol"/>
    <property type="evidence" value="ECO:0007669"/>
    <property type="project" value="TreeGrafter"/>
</dbReference>
<dbReference type="GO" id="GO:0002161">
    <property type="term" value="F:aminoacyl-tRNA deacylase activity"/>
    <property type="evidence" value="ECO:0007669"/>
    <property type="project" value="InterPro"/>
</dbReference>
<dbReference type="GO" id="GO:0005524">
    <property type="term" value="F:ATP binding"/>
    <property type="evidence" value="ECO:0007669"/>
    <property type="project" value="UniProtKB-UniRule"/>
</dbReference>
<dbReference type="GO" id="GO:0004827">
    <property type="term" value="F:proline-tRNA ligase activity"/>
    <property type="evidence" value="ECO:0007669"/>
    <property type="project" value="UniProtKB-UniRule"/>
</dbReference>
<dbReference type="GO" id="GO:0006433">
    <property type="term" value="P:prolyl-tRNA aminoacylation"/>
    <property type="evidence" value="ECO:0007669"/>
    <property type="project" value="UniProtKB-UniRule"/>
</dbReference>
<dbReference type="CDD" id="cd04334">
    <property type="entry name" value="ProRS-INS"/>
    <property type="match status" value="1"/>
</dbReference>
<dbReference type="CDD" id="cd00861">
    <property type="entry name" value="ProRS_anticodon_short"/>
    <property type="match status" value="1"/>
</dbReference>
<dbReference type="CDD" id="cd00779">
    <property type="entry name" value="ProRS_core_prok"/>
    <property type="match status" value="1"/>
</dbReference>
<dbReference type="FunFam" id="3.30.930.10:FF:000065">
    <property type="entry name" value="Proline--tRNA ligase"/>
    <property type="match status" value="1"/>
</dbReference>
<dbReference type="FunFam" id="3.30.930.10:FF:000066">
    <property type="entry name" value="Proline--tRNA ligase"/>
    <property type="match status" value="1"/>
</dbReference>
<dbReference type="Gene3D" id="3.40.50.800">
    <property type="entry name" value="Anticodon-binding domain"/>
    <property type="match status" value="1"/>
</dbReference>
<dbReference type="Gene3D" id="3.30.930.10">
    <property type="entry name" value="Bira Bifunctional Protein, Domain 2"/>
    <property type="match status" value="2"/>
</dbReference>
<dbReference type="HAMAP" id="MF_01569">
    <property type="entry name" value="Pro_tRNA_synth_type1"/>
    <property type="match status" value="1"/>
</dbReference>
<dbReference type="InterPro" id="IPR002314">
    <property type="entry name" value="aa-tRNA-synt_IIb"/>
</dbReference>
<dbReference type="InterPro" id="IPR006195">
    <property type="entry name" value="aa-tRNA-synth_II"/>
</dbReference>
<dbReference type="InterPro" id="IPR045864">
    <property type="entry name" value="aa-tRNA-synth_II/BPL/LPL"/>
</dbReference>
<dbReference type="InterPro" id="IPR004154">
    <property type="entry name" value="Anticodon-bd"/>
</dbReference>
<dbReference type="InterPro" id="IPR036621">
    <property type="entry name" value="Anticodon-bd_dom_sf"/>
</dbReference>
<dbReference type="InterPro" id="IPR002316">
    <property type="entry name" value="Pro-tRNA-ligase_IIa"/>
</dbReference>
<dbReference type="InterPro" id="IPR004500">
    <property type="entry name" value="Pro-tRNA-synth_IIa_bac-type"/>
</dbReference>
<dbReference type="InterPro" id="IPR023717">
    <property type="entry name" value="Pro-tRNA-Synthase_IIa_type1"/>
</dbReference>
<dbReference type="InterPro" id="IPR050062">
    <property type="entry name" value="Pro-tRNA_synthetase"/>
</dbReference>
<dbReference type="InterPro" id="IPR044140">
    <property type="entry name" value="ProRS_anticodon_short"/>
</dbReference>
<dbReference type="InterPro" id="IPR033730">
    <property type="entry name" value="ProRS_core_prok"/>
</dbReference>
<dbReference type="InterPro" id="IPR036754">
    <property type="entry name" value="YbaK/aa-tRNA-synt-asso_dom_sf"/>
</dbReference>
<dbReference type="InterPro" id="IPR007214">
    <property type="entry name" value="YbaK/aa-tRNA-synth-assoc-dom"/>
</dbReference>
<dbReference type="NCBIfam" id="NF006625">
    <property type="entry name" value="PRK09194.1"/>
    <property type="match status" value="1"/>
</dbReference>
<dbReference type="NCBIfam" id="TIGR00409">
    <property type="entry name" value="proS_fam_II"/>
    <property type="match status" value="1"/>
</dbReference>
<dbReference type="PANTHER" id="PTHR42753">
    <property type="entry name" value="MITOCHONDRIAL RIBOSOME PROTEIN L39/PROLYL-TRNA LIGASE FAMILY MEMBER"/>
    <property type="match status" value="1"/>
</dbReference>
<dbReference type="PANTHER" id="PTHR42753:SF2">
    <property type="entry name" value="PROLINE--TRNA LIGASE"/>
    <property type="match status" value="1"/>
</dbReference>
<dbReference type="Pfam" id="PF03129">
    <property type="entry name" value="HGTP_anticodon"/>
    <property type="match status" value="1"/>
</dbReference>
<dbReference type="Pfam" id="PF00587">
    <property type="entry name" value="tRNA-synt_2b"/>
    <property type="match status" value="1"/>
</dbReference>
<dbReference type="Pfam" id="PF04073">
    <property type="entry name" value="tRNA_edit"/>
    <property type="match status" value="1"/>
</dbReference>
<dbReference type="PRINTS" id="PR01046">
    <property type="entry name" value="TRNASYNTHPRO"/>
</dbReference>
<dbReference type="SUPFAM" id="SSF52954">
    <property type="entry name" value="Class II aaRS ABD-related"/>
    <property type="match status" value="1"/>
</dbReference>
<dbReference type="SUPFAM" id="SSF55681">
    <property type="entry name" value="Class II aaRS and biotin synthetases"/>
    <property type="match status" value="1"/>
</dbReference>
<dbReference type="SUPFAM" id="SSF55826">
    <property type="entry name" value="YbaK/ProRS associated domain"/>
    <property type="match status" value="1"/>
</dbReference>
<dbReference type="PROSITE" id="PS50862">
    <property type="entry name" value="AA_TRNA_LIGASE_II"/>
    <property type="match status" value="1"/>
</dbReference>